<sequence>MRQGAARGCRWFVVWALLGLTLGVLVASAAPSSPGTPGVAAATQAANGGPATPAPPAPGPAPTGDTKPKKNKKPKNPPPPRPAGDNATVAAGHATLREHLRDIKAENTDANFYVCPPPTGATVVQFEQPRRCPTRPEGQNYTEGIAVVFKENIAPYKFKATMYYKDVTVSQVWFGHRYSQFMGIFEDRAPVPFEEVIDKINAKGVCRSTAKYVRNNLETTAFHRDDHETDMELKPANAATRTSRGWHTTDLKYNPSRVEAFHRYGTTVNCIVEEVDARSVYPYDEFVLATGDFVYMSPFYGYREGSHTEHTSYAADRFKQVDGFYARDLTTKARATAPTTRNLLTTPKFTVAWDWVPKRPSVCTMTKWQEVDEMLRSEYGGSFRFSSDAISTTFTTNLTEYPLSRVDLGDCIGKDARDAMDRIFARRYNATHIKVGQPQYYLANGGFLIAYQPLLSNTLAELYVREHLREQSRKPPNPTPPPPGASANASVERIKTTSSIEFARLQFTYNHIQRHVNDMLGRVAIAWCELQNHELTLWNEARKLNPNAIASATVGRRVSARMLGDVMAVSTCVPVAADNVIVQNSMRISSRPGACYSRPLVSFRYEDQGPLVEGQLGENNELRLTRDAIEPCTVGHRRYFTFGGGYVYFEEYAYSHQLSRADITTVSTFIDLNITMLEDHEFVPLEVYTRHEIKDSGLLDYTEVQRRNQLHDLRFADIDTVIHADANAAMFAGLGAFFEGMGDLGRAVGKVVMGIVGGVVSAVSGVSSFMSNPFGALAVGLLVLAGLAAAFFAFRYVMRLQSNPMKALYPLTTKELKNPTNPDASGEGEEGGDFDEAKLAEAREMIRYMALVSAMERTEHKAKKKGTSALLSAKVTDMVMRKRRNTNYTQVPNKDGDADEDDL</sequence>
<reference key="1">
    <citation type="journal article" date="1985" name="J. Virol.">
        <title>Anatomy of the herpes simplex virus 1 strain F glycoprotein B gene: primary sequence and predicted protein structure of the wild type and of monoclonal antibody-resistant mutants.</title>
        <authorList>
            <person name="Pellett P.E."/>
            <person name="Kousoulas K.G."/>
            <person name="Pereira L."/>
            <person name="Roizman B."/>
        </authorList>
    </citation>
    <scope>NUCLEOTIDE SEQUENCE [GENOMIC DNA]</scope>
</reference>
<reference key="2">
    <citation type="journal article" date="1988" name="Virology">
        <title>Common epitopes of glycoprotein B map within the major DNA-binding proteins of bovine herpesvirus type 2 (BHV-2) and herpes simplex virus type 1 (HSV-1).</title>
        <authorList>
            <person name="Hammerschmidt W."/>
            <person name="Conraths F."/>
            <person name="Mankertz J."/>
            <person name="Buhk H.-J."/>
            <person name="Pauli G."/>
            <person name="Ludwig H."/>
        </authorList>
    </citation>
    <scope>NUCLEOTIDE SEQUENCE [GENOMIC DNA] OF 1-176</scope>
</reference>
<reference key="3">
    <citation type="journal article" date="2007" name="Proc. Natl. Acad. Sci. U.S.A.">
        <title>Herpes simplex virus glycoproteins gB and gH function in fusion between the virion envelope and the outer nuclear membrane.</title>
        <authorList>
            <person name="Farnsworth A."/>
            <person name="Wisner T.W."/>
            <person name="Webb M."/>
            <person name="Roller R.J."/>
            <person name="Cohen G.H."/>
            <person name="Eisenberg R.J."/>
            <person name="Johnson D.C."/>
        </authorList>
    </citation>
    <scope>FUNCTION</scope>
</reference>
<reference key="4">
    <citation type="journal article" date="2009" name="J. Biol. Chem.">
        <title>Herpes simplex virus gD forms distinct complexes with fusion executors gB and gH/gL in part through the C-terminal profusion domain.</title>
        <authorList>
            <person name="Gianni T."/>
            <person name="Amasio M."/>
            <person name="Campadelli-Fiume G."/>
        </authorList>
    </citation>
    <scope>INTERACTION WITH GD</scope>
</reference>
<reference key="5">
    <citation type="journal article" date="2008" name="Cell">
        <title>PILRalpha is a herpes simplex virus-1 entry coreceptor that associates with glycoprotein B.</title>
        <authorList>
            <person name="Satoh T."/>
            <person name="Arii J."/>
            <person name="Suenaga T."/>
            <person name="Wang J."/>
            <person name="Kogure A."/>
            <person name="Uehori J."/>
            <person name="Arase N."/>
            <person name="Shiratori I."/>
            <person name="Tanaka S."/>
            <person name="Kawaguchi Y."/>
            <person name="Spear P.G."/>
            <person name="Lanier L.L."/>
            <person name="Arase H."/>
        </authorList>
    </citation>
    <scope>INTERACTION WITH THE HUMAN CORECEPTOR PILRA</scope>
</reference>
<reference key="6">
    <citation type="journal article" date="2004" name="J. Immunol.">
        <title>The structure of H-2K(b) and K(bm8) complexed to a herpes simplex virus determinant: evidence for a conformational switch that governs T cell repertoire selection and viral resistance.</title>
        <authorList>
            <person name="Webb A.I."/>
            <person name="Borg N.A."/>
            <person name="Dunstone M.A."/>
            <person name="Kjer-Nielsen L."/>
            <person name="Beddoe T."/>
            <person name="McCluskey J."/>
            <person name="Carbone F.R."/>
            <person name="Bottomley S.P."/>
            <person name="Aguilar M.I."/>
            <person name="Purcell A.W."/>
            <person name="Rossjohn J."/>
        </authorList>
    </citation>
    <scope>X-RAY CRYSTALLOGRAPHY (1.8 ANGSTROMS) OF 498-505 IN COMPLEX WITH H-2K(B) AND K(BM8)</scope>
</reference>
<reference key="7">
    <citation type="journal article" date="2008" name="J. Virol.">
        <title>Comprehensive characterization of extracellular herpes simplex virus type 1 virions.</title>
        <authorList>
            <person name="Loret S."/>
            <person name="Guay G."/>
            <person name="Lippe R."/>
        </authorList>
    </citation>
    <scope>SUBCELLULAR LOCATION</scope>
</reference>
<reference key="8">
    <citation type="journal article" date="2010" name="Nature">
        <title>Non-muscle myosin IIA is a functional entry receptor for herpes simplex virus-1.</title>
        <authorList>
            <person name="Arii J."/>
            <person name="Goto H."/>
            <person name="Suenaga T."/>
            <person name="Oyama M."/>
            <person name="Kozuka-Hata H."/>
            <person name="Imai T."/>
            <person name="Minowa A."/>
            <person name="Akashi H."/>
            <person name="Arase H."/>
            <person name="Kawaoka Y."/>
            <person name="Kawaguchi Y."/>
        </authorList>
    </citation>
    <scope>FUNCTION</scope>
    <scope>INTERACTION WITH HOST MYH9</scope>
</reference>
<reference key="9">
    <citation type="journal article" date="2015" name="J. Virol.">
        <title>Nonmuscle myosin heavy chain IIb mediates herpes simplex virus 1 entry.</title>
        <authorList>
            <person name="Arii J."/>
            <person name="Hirohata Y."/>
            <person name="Kato A."/>
            <person name="Kawaguchi Y."/>
        </authorList>
    </citation>
    <scope>FUNCTION</scope>
    <scope>INTERACTION WITH HOST MYH10</scope>
</reference>
<keyword id="KW-0002">3D-structure</keyword>
<keyword id="KW-1015">Disulfide bond</keyword>
<keyword id="KW-0325">Glycoprotein</keyword>
<keyword id="KW-1032">Host cell membrane</keyword>
<keyword id="KW-1039">Host endosome</keyword>
<keyword id="KW-1040">Host Golgi apparatus</keyword>
<keyword id="KW-1043">Host membrane</keyword>
<keyword id="KW-0945">Host-virus interaction</keyword>
<keyword id="KW-0472">Membrane</keyword>
<keyword id="KW-0732">Signal</keyword>
<keyword id="KW-0812">Transmembrane</keyword>
<keyword id="KW-1133">Transmembrane helix</keyword>
<keyword id="KW-0832">Ubl conjugation</keyword>
<keyword id="KW-1161">Viral attachment to host cell</keyword>
<keyword id="KW-0261">Viral envelope protein</keyword>
<keyword id="KW-0946">Virion</keyword>
<keyword id="KW-1160">Virus entry into host cell</keyword>
<protein>
    <recommendedName>
        <fullName evidence="2">Envelope glycoprotein B</fullName>
        <shortName evidence="2">gB</shortName>
    </recommendedName>
</protein>
<organismHost>
    <name type="scientific">Homo sapiens</name>
    <name type="common">Human</name>
    <dbReference type="NCBI Taxonomy" id="9606"/>
</organismHost>
<comment type="function">
    <text evidence="2 4 7 8">Envelope glycoprotein that forms spikes at the surface of virion envelope and binds to the host cell entry receptors MYH9/NMMHC-IIA and MYH10/NMMHC-IIB, promoting the virus entry into host cells. Essential for the initial attachment to heparan sulfate moieties of the host cell surface proteoglycans. Involved in fusion of viral and cellular membranes leading to virus entry into the host cell: following initial binding to its host cell entry receptors, membrane fusion is mediated by the fusion machinery composed at least of gB and the heterodimer gH/gL. May be involved in the fusion between the virion envelope and the outer nuclear membrane during virion egress. Also plays a role, together with gK, in virus-induced cell-to-cell fusion (syncytia formation).</text>
</comment>
<comment type="subunit">
    <text evidence="2 5 6 7 8">Homotrimer; disulfide-linked (By similarity). Interacts with host receptor MYH9/NMMHC-IIA (PubMed:20944748). Interacts with host receptor MYH10/NMMHC-IIB (PubMed:25428876). Interacts with the host coreceptor PILRA (PubMed:18358807). Binds to heparan sulfate proteoglycans (By similarity). Interacts with gH/gL heterodimer (By similarity). Interacts with gD (PubMed:19386594).</text>
</comment>
<comment type="interaction">
    <interactant intactId="EBI-1771271">
        <id>P06436</id>
    </interactant>
    <interactant intactId="EBI-965833">
        <id>Q9UKJ1</id>
        <label>PILRA</label>
    </interactant>
    <organismsDiffer>true</organismsDiffer>
    <experiments>3</experiments>
</comment>
<comment type="subcellular location">
    <subcellularLocation>
        <location evidence="2">Virion membrane</location>
        <topology evidence="2">Single-pass type I membrane protein</topology>
    </subcellularLocation>
    <subcellularLocation>
        <location evidence="2">Host cell membrane</location>
        <topology evidence="2">Single-pass type I membrane protein</topology>
    </subcellularLocation>
    <subcellularLocation>
        <location evidence="2">Host endosome membrane</location>
        <topology evidence="2">Single-pass type I membrane protein</topology>
    </subcellularLocation>
    <subcellularLocation>
        <location evidence="2">Host Golgi apparatus membrane</location>
        <topology evidence="2">Single-pass type I membrane protein</topology>
    </subcellularLocation>
    <text evidence="2">During virion morphogenesis, this protein probably accumulates in the endosomes and trans-Golgi where secondary envelopment occurs. It is probably transported to the cell surface from where it is endocytosed and directed to the trans-Golgi network (TGN).</text>
</comment>
<comment type="PTM">
    <text evidence="1">The cytoplasmic tail is phosphorylated by the viral kinase US3. Phosphorylation may be linked to a down-regulation of gB expression on cell surface (By similarity).</text>
</comment>
<comment type="PTM">
    <text evidence="1">ubiquitinated.</text>
</comment>
<comment type="similarity">
    <text evidence="2">Belongs to the herpesviridae glycoprotein B family.</text>
</comment>
<gene>
    <name evidence="2" type="primary">gB</name>
    <name type="ORF">UL27</name>
</gene>
<feature type="signal peptide" evidence="2">
    <location>
        <begin position="1"/>
        <end position="29"/>
    </location>
</feature>
<feature type="chain" id="PRO_0000038161" description="Envelope glycoprotein B" evidence="2">
    <location>
        <begin position="30"/>
        <end position="903"/>
    </location>
</feature>
<feature type="topological domain" description="Virion surface" evidence="2">
    <location>
        <begin position="30"/>
        <end position="773"/>
    </location>
</feature>
<feature type="transmembrane region" description="Helical" evidence="2">
    <location>
        <begin position="774"/>
        <end position="794"/>
    </location>
</feature>
<feature type="topological domain" description="Intravirion" evidence="2">
    <location>
        <begin position="795"/>
        <end position="903"/>
    </location>
</feature>
<feature type="region of interest" description="Disordered" evidence="3">
    <location>
        <begin position="30"/>
        <end position="87"/>
    </location>
</feature>
<feature type="region of interest" description="Involved in fusion and/or binding to host membrane" evidence="2">
    <location>
        <begin position="172"/>
        <end position="178"/>
    </location>
</feature>
<feature type="region of interest" description="Involved in fusion and/or binding to host membrane" evidence="2">
    <location>
        <begin position="257"/>
        <end position="264"/>
    </location>
</feature>
<feature type="region of interest" description="Disordered" evidence="3">
    <location>
        <begin position="469"/>
        <end position="491"/>
    </location>
</feature>
<feature type="region of interest" description="Hydrophobic membrane proximal region" evidence="2">
    <location>
        <begin position="718"/>
        <end position="771"/>
    </location>
</feature>
<feature type="region of interest" description="Disordered" evidence="3">
    <location>
        <begin position="882"/>
        <end position="903"/>
    </location>
</feature>
<feature type="short sequence motif" description="Golgi targeting" evidence="2">
    <location>
        <begin position="848"/>
        <end position="851"/>
    </location>
</feature>
<feature type="short sequence motif" description="Internalization motif" evidence="2">
    <location>
        <begin position="888"/>
        <end position="891"/>
    </location>
</feature>
<feature type="compositionally biased region" description="Low complexity" evidence="3">
    <location>
        <begin position="30"/>
        <end position="51"/>
    </location>
</feature>
<feature type="compositionally biased region" description="Pro residues" evidence="3">
    <location>
        <begin position="52"/>
        <end position="61"/>
    </location>
</feature>
<feature type="compositionally biased region" description="Pro residues" evidence="3">
    <location>
        <begin position="475"/>
        <end position="484"/>
    </location>
</feature>
<feature type="glycosylation site" description="N-linked (GlcNAc...) asparagine; by host" evidence="2">
    <location>
        <position position="86"/>
    </location>
</feature>
<feature type="glycosylation site" description="N-linked (GlcNAc...) asparagine; by host" evidence="2">
    <location>
        <position position="140"/>
    </location>
</feature>
<feature type="glycosylation site" description="N-linked (GlcNAc...) asparagine; by host" evidence="2">
    <location>
        <position position="397"/>
    </location>
</feature>
<feature type="glycosylation site" description="N-linked (GlcNAc...) asparagine; by host" evidence="2">
    <location>
        <position position="429"/>
    </location>
</feature>
<feature type="glycosylation site" description="N-linked (GlcNAc...) asparagine; by host" evidence="2">
    <location>
        <position position="488"/>
    </location>
</feature>
<feature type="glycosylation site" description="N-linked (GlcNAc...) asparagine; by host" evidence="2">
    <location>
        <position position="673"/>
    </location>
</feature>
<feature type="disulfide bond" evidence="2">
    <location>
        <begin position="115"/>
        <end position="572"/>
    </location>
</feature>
<feature type="disulfide bond" evidence="2">
    <location>
        <begin position="132"/>
        <end position="528"/>
    </location>
</feature>
<feature type="disulfide bond" evidence="2">
    <location>
        <begin position="206"/>
        <end position="270"/>
    </location>
</feature>
<feature type="disulfide bond" evidence="2">
    <location>
        <begin position="363"/>
        <end position="411"/>
    </location>
</feature>
<feature type="disulfide bond" evidence="2">
    <location>
        <begin position="595"/>
        <end position="632"/>
    </location>
</feature>
<feature type="strand" evidence="9">
    <location>
        <begin position="112"/>
        <end position="114"/>
    </location>
</feature>
<feature type="strand" evidence="9">
    <location>
        <begin position="122"/>
        <end position="126"/>
    </location>
</feature>
<feature type="strand" evidence="9">
    <location>
        <begin position="144"/>
        <end position="151"/>
    </location>
</feature>
<feature type="strand" evidence="9">
    <location>
        <begin position="156"/>
        <end position="174"/>
    </location>
</feature>
<feature type="strand" evidence="9">
    <location>
        <begin position="179"/>
        <end position="190"/>
    </location>
</feature>
<feature type="helix" evidence="9">
    <location>
        <begin position="193"/>
        <end position="196"/>
    </location>
</feature>
<feature type="helix" evidence="9">
    <location>
        <begin position="197"/>
        <end position="201"/>
    </location>
</feature>
<feature type="strand" evidence="9">
    <location>
        <begin position="203"/>
        <end position="213"/>
    </location>
</feature>
<feature type="strand" evidence="9">
    <location>
        <begin position="215"/>
        <end position="222"/>
    </location>
</feature>
<feature type="helix" evidence="9">
    <location>
        <begin position="223"/>
        <end position="225"/>
    </location>
</feature>
<feature type="strand" evidence="9">
    <location>
        <begin position="230"/>
        <end position="232"/>
    </location>
</feature>
<feature type="strand" evidence="9">
    <location>
        <begin position="245"/>
        <end position="248"/>
    </location>
</feature>
<feature type="strand" evidence="9">
    <location>
        <begin position="262"/>
        <end position="279"/>
    </location>
</feature>
<feature type="strand" evidence="9">
    <location>
        <begin position="286"/>
        <end position="288"/>
    </location>
</feature>
<feature type="strand" evidence="10">
    <location>
        <begin position="301"/>
        <end position="303"/>
    </location>
</feature>
<feature type="turn" evidence="9">
    <location>
        <begin position="304"/>
        <end position="307"/>
    </location>
</feature>
<feature type="helix" evidence="9">
    <location>
        <begin position="315"/>
        <end position="317"/>
    </location>
</feature>
<feature type="strand" evidence="9">
    <location>
        <begin position="318"/>
        <end position="324"/>
    </location>
</feature>
<feature type="turn" evidence="9">
    <location>
        <begin position="329"/>
        <end position="331"/>
    </location>
</feature>
<feature type="strand" evidence="9">
    <location>
        <begin position="339"/>
        <end position="345"/>
    </location>
</feature>
<feature type="strand" evidence="9">
    <location>
        <begin position="350"/>
        <end position="354"/>
    </location>
</feature>
<feature type="turn" evidence="9">
    <location>
        <begin position="359"/>
        <end position="361"/>
    </location>
</feature>
<feature type="strand" evidence="9">
    <location>
        <begin position="364"/>
        <end position="379"/>
    </location>
</feature>
<feature type="strand" evidence="9">
    <location>
        <begin position="382"/>
        <end position="387"/>
    </location>
</feature>
<feature type="turn" evidence="9">
    <location>
        <begin position="388"/>
        <end position="391"/>
    </location>
</feature>
<feature type="strand" evidence="9">
    <location>
        <begin position="392"/>
        <end position="399"/>
    </location>
</feature>
<feature type="helix" evidence="9">
    <location>
        <begin position="403"/>
        <end position="405"/>
    </location>
</feature>
<feature type="helix" evidence="9">
    <location>
        <begin position="410"/>
        <end position="427"/>
    </location>
</feature>
<feature type="turn" evidence="9">
    <location>
        <begin position="428"/>
        <end position="431"/>
    </location>
</feature>
<feature type="strand" evidence="9">
    <location>
        <begin position="432"/>
        <end position="434"/>
    </location>
</feature>
<feature type="strand" evidence="9">
    <location>
        <begin position="439"/>
        <end position="443"/>
    </location>
</feature>
<feature type="turn" evidence="9">
    <location>
        <begin position="444"/>
        <end position="446"/>
    </location>
</feature>
<feature type="strand" evidence="9">
    <location>
        <begin position="447"/>
        <end position="456"/>
    </location>
</feature>
<feature type="helix" evidence="9">
    <location>
        <begin position="501"/>
        <end position="544"/>
    </location>
</feature>
<feature type="helix" evidence="9">
    <location>
        <begin position="546"/>
        <end position="554"/>
    </location>
</feature>
<feature type="strand" evidence="9">
    <location>
        <begin position="558"/>
        <end position="562"/>
    </location>
</feature>
<feature type="strand" evidence="9">
    <location>
        <begin position="564"/>
        <end position="571"/>
    </location>
</feature>
<feature type="strand" evidence="9">
    <location>
        <begin position="573"/>
        <end position="575"/>
    </location>
</feature>
<feature type="helix" evidence="9">
    <location>
        <begin position="577"/>
        <end position="579"/>
    </location>
</feature>
<feature type="strand" evidence="9">
    <location>
        <begin position="580"/>
        <end position="582"/>
    </location>
</feature>
<feature type="strand" evidence="10">
    <location>
        <begin position="589"/>
        <end position="591"/>
    </location>
</feature>
<feature type="strand" evidence="9">
    <location>
        <begin position="594"/>
        <end position="598"/>
    </location>
</feature>
<feature type="strand" evidence="9">
    <location>
        <begin position="600"/>
        <end position="603"/>
    </location>
</feature>
<feature type="strand" evidence="9">
    <location>
        <begin position="612"/>
        <end position="616"/>
    </location>
</feature>
<feature type="strand" evidence="9">
    <location>
        <begin position="620"/>
        <end position="624"/>
    </location>
</feature>
<feature type="strand" evidence="9">
    <location>
        <begin position="629"/>
        <end position="631"/>
    </location>
</feature>
<feature type="strand" evidence="9">
    <location>
        <begin position="637"/>
        <end position="642"/>
    </location>
</feature>
<feature type="strand" evidence="9">
    <location>
        <begin position="645"/>
        <end position="650"/>
    </location>
</feature>
<feature type="strand" evidence="9">
    <location>
        <begin position="653"/>
        <end position="658"/>
    </location>
</feature>
<feature type="helix" evidence="9">
    <location>
        <begin position="660"/>
        <end position="662"/>
    </location>
</feature>
<feature type="strand" evidence="9">
    <location>
        <begin position="663"/>
        <end position="666"/>
    </location>
</feature>
<feature type="helix" evidence="9">
    <location>
        <begin position="690"/>
        <end position="696"/>
    </location>
</feature>
<feature type="helix" evidence="9">
    <location>
        <begin position="701"/>
        <end position="708"/>
    </location>
</feature>
<feature type="helix" evidence="9">
    <location>
        <begin position="711"/>
        <end position="715"/>
    </location>
</feature>
<organism>
    <name type="scientific">Human herpesvirus 1 (strain F)</name>
    <name type="common">HHV-1</name>
    <name type="synonym">Human herpes simplex virus 1</name>
    <dbReference type="NCBI Taxonomy" id="10304"/>
    <lineage>
        <taxon>Viruses</taxon>
        <taxon>Duplodnaviria</taxon>
        <taxon>Heunggongvirae</taxon>
        <taxon>Peploviricota</taxon>
        <taxon>Herviviricetes</taxon>
        <taxon>Herpesvirales</taxon>
        <taxon>Orthoherpesviridae</taxon>
        <taxon>Alphaherpesvirinae</taxon>
        <taxon>Simplexvirus</taxon>
        <taxon>Simplexvirus humanalpha1</taxon>
        <taxon>Human herpesvirus 1</taxon>
    </lineage>
</organism>
<dbReference type="EMBL" id="M14164">
    <property type="protein sequence ID" value="AAA45776.1"/>
    <property type="molecule type" value="Genomic_DNA"/>
</dbReference>
<dbReference type="EMBL" id="AH002357">
    <property type="protein sequence ID" value="AAA45788.1"/>
    <property type="molecule type" value="Genomic_DNA"/>
</dbReference>
<dbReference type="PIR" id="A03750">
    <property type="entry name" value="VGBEB1"/>
</dbReference>
<dbReference type="PDB" id="1RJY">
    <property type="method" value="X-ray"/>
    <property type="resolution" value="1.90 A"/>
    <property type="chains" value="P/Q=498-505"/>
</dbReference>
<dbReference type="PDB" id="1RJZ">
    <property type="method" value="X-ray"/>
    <property type="resolution" value="2.60 A"/>
    <property type="chains" value="P/Q=498-505"/>
</dbReference>
<dbReference type="PDB" id="1RK0">
    <property type="method" value="X-ray"/>
    <property type="resolution" value="2.61 A"/>
    <property type="chains" value="P=498-505"/>
</dbReference>
<dbReference type="PDB" id="1RK1">
    <property type="method" value="X-ray"/>
    <property type="resolution" value="2.10 A"/>
    <property type="chains" value="P=498-505"/>
</dbReference>
<dbReference type="PDB" id="1T0M">
    <property type="method" value="X-ray"/>
    <property type="resolution" value="2.00 A"/>
    <property type="chains" value="P/Q=498-505"/>
</dbReference>
<dbReference type="PDB" id="1T0N">
    <property type="method" value="X-ray"/>
    <property type="resolution" value="1.80 A"/>
    <property type="chains" value="P/Q=498-505"/>
</dbReference>
<dbReference type="PDB" id="8RGZ">
    <property type="method" value="EM"/>
    <property type="resolution" value="3.27 A"/>
    <property type="chains" value="A/B/C=1-903"/>
</dbReference>
<dbReference type="PDB" id="8RH0">
    <property type="method" value="EM"/>
    <property type="resolution" value="3.44 A"/>
    <property type="chains" value="A/B/C=1-903"/>
</dbReference>
<dbReference type="PDBsum" id="1RJY"/>
<dbReference type="PDBsum" id="1RJZ"/>
<dbReference type="PDBsum" id="1RK0"/>
<dbReference type="PDBsum" id="1RK1"/>
<dbReference type="PDBsum" id="1T0M"/>
<dbReference type="PDBsum" id="1T0N"/>
<dbReference type="PDBsum" id="8RGZ"/>
<dbReference type="PDBsum" id="8RH0"/>
<dbReference type="EMDB" id="EMD-19163"/>
<dbReference type="EMDB" id="EMD-19164"/>
<dbReference type="SMR" id="P06436"/>
<dbReference type="IntAct" id="P06436">
    <property type="interactions" value="1"/>
</dbReference>
<dbReference type="GlyCosmos" id="P06436">
    <property type="glycosylation" value="6 sites, No reported glycans"/>
</dbReference>
<dbReference type="ABCD" id="P06436">
    <property type="antibodies" value="2 sequenced antibodies"/>
</dbReference>
<dbReference type="EvolutionaryTrace" id="P06436"/>
<dbReference type="GO" id="GO:0044175">
    <property type="term" value="C:host cell endosome membrane"/>
    <property type="evidence" value="ECO:0007669"/>
    <property type="project" value="UniProtKB-SubCell"/>
</dbReference>
<dbReference type="GO" id="GO:0044178">
    <property type="term" value="C:host cell Golgi membrane"/>
    <property type="evidence" value="ECO:0007669"/>
    <property type="project" value="UniProtKB-SubCell"/>
</dbReference>
<dbReference type="GO" id="GO:0020002">
    <property type="term" value="C:host cell plasma membrane"/>
    <property type="evidence" value="ECO:0007669"/>
    <property type="project" value="UniProtKB-SubCell"/>
</dbReference>
<dbReference type="GO" id="GO:0016020">
    <property type="term" value="C:membrane"/>
    <property type="evidence" value="ECO:0007669"/>
    <property type="project" value="UniProtKB-KW"/>
</dbReference>
<dbReference type="GO" id="GO:0019031">
    <property type="term" value="C:viral envelope"/>
    <property type="evidence" value="ECO:0000314"/>
    <property type="project" value="CACAO"/>
</dbReference>
<dbReference type="GO" id="GO:0055036">
    <property type="term" value="C:virion membrane"/>
    <property type="evidence" value="ECO:0000250"/>
    <property type="project" value="UniProt"/>
</dbReference>
<dbReference type="GO" id="GO:0048018">
    <property type="term" value="F:receptor ligand activity"/>
    <property type="evidence" value="ECO:0000314"/>
    <property type="project" value="UniProtKB"/>
</dbReference>
<dbReference type="GO" id="GO:0046718">
    <property type="term" value="P:symbiont entry into host cell"/>
    <property type="evidence" value="ECO:0000314"/>
    <property type="project" value="UniProtKB"/>
</dbReference>
<dbReference type="GO" id="GO:0019062">
    <property type="term" value="P:virion attachment to host cell"/>
    <property type="evidence" value="ECO:0007669"/>
    <property type="project" value="UniProtKB-KW"/>
</dbReference>
<dbReference type="FunFam" id="1.20.5.1890:FF:000001">
    <property type="entry name" value="Envelope glycoprotein B"/>
    <property type="match status" value="1"/>
</dbReference>
<dbReference type="FunFam" id="2.30.29.100:FF:000001">
    <property type="entry name" value="Envelope glycoprotein B"/>
    <property type="match status" value="1"/>
</dbReference>
<dbReference type="FunFam" id="2.30.30.1230:FF:000001">
    <property type="entry name" value="Envelope glycoprotein B"/>
    <property type="match status" value="1"/>
</dbReference>
<dbReference type="FunFam" id="6.10.250.3280:FF:000001">
    <property type="entry name" value="Envelope glycoprotein B"/>
    <property type="match status" value="1"/>
</dbReference>
<dbReference type="Gene3D" id="1.20.5.1890">
    <property type="match status" value="1"/>
</dbReference>
<dbReference type="Gene3D" id="2.30.29.100">
    <property type="match status" value="1"/>
</dbReference>
<dbReference type="Gene3D" id="2.30.30.1230">
    <property type="match status" value="1"/>
</dbReference>
<dbReference type="Gene3D" id="6.10.250.3280">
    <property type="match status" value="1"/>
</dbReference>
<dbReference type="HAMAP" id="MF_04032">
    <property type="entry name" value="HSV_GB"/>
    <property type="match status" value="1"/>
</dbReference>
<dbReference type="InterPro" id="IPR035377">
    <property type="entry name" value="Glycoprot_B_PH1"/>
</dbReference>
<dbReference type="InterPro" id="IPR035381">
    <property type="entry name" value="Glycoprot_B_PH2"/>
</dbReference>
<dbReference type="InterPro" id="IPR038631">
    <property type="entry name" value="Glycoprot_B_PH2_sf"/>
</dbReference>
<dbReference type="InterPro" id="IPR055341">
    <property type="entry name" value="Glycoprotein_B_ecto_C"/>
</dbReference>
<dbReference type="InterPro" id="IPR000234">
    <property type="entry name" value="Herpes_Glycoprot_B"/>
</dbReference>
<dbReference type="Pfam" id="PF17416">
    <property type="entry name" value="Glycoprot_B_PH1"/>
    <property type="match status" value="1"/>
</dbReference>
<dbReference type="Pfam" id="PF17417">
    <property type="entry name" value="Glycoprot_B_PH2"/>
    <property type="match status" value="1"/>
</dbReference>
<dbReference type="Pfam" id="PF00606">
    <property type="entry name" value="Glycoprotein_B"/>
    <property type="match status" value="1"/>
</dbReference>
<dbReference type="SUPFAM" id="SSF161008">
    <property type="entry name" value="Viral glycoprotein ectodomain-like"/>
    <property type="match status" value="1"/>
</dbReference>
<name>GB_HHV1F</name>
<accession>P06436</accession>
<evidence type="ECO:0000250" key="1"/>
<evidence type="ECO:0000255" key="2">
    <source>
        <dbReference type="HAMAP-Rule" id="MF_04032"/>
    </source>
</evidence>
<evidence type="ECO:0000256" key="3">
    <source>
        <dbReference type="SAM" id="MobiDB-lite"/>
    </source>
</evidence>
<evidence type="ECO:0000269" key="4">
    <source>
    </source>
</evidence>
<evidence type="ECO:0000269" key="5">
    <source>
    </source>
</evidence>
<evidence type="ECO:0000269" key="6">
    <source>
    </source>
</evidence>
<evidence type="ECO:0000269" key="7">
    <source>
    </source>
</evidence>
<evidence type="ECO:0000269" key="8">
    <source>
    </source>
</evidence>
<evidence type="ECO:0007829" key="9">
    <source>
        <dbReference type="PDB" id="8RGZ"/>
    </source>
</evidence>
<evidence type="ECO:0007829" key="10">
    <source>
        <dbReference type="PDB" id="8RH0"/>
    </source>
</evidence>
<proteinExistence type="evidence at protein level"/>